<protein>
    <recommendedName>
        <fullName>(+)-epi-alpha-bisabolol synthase</fullName>
        <ecNumber>4.2.3.138</ecNumber>
    </recommendedName>
    <alternativeName>
        <fullName>Terpene synthase 8</fullName>
        <shortName>LdTPS8</shortName>
    </alternativeName>
</protein>
<evidence type="ECO:0000250" key="1"/>
<evidence type="ECO:0000269" key="2">
    <source>
    </source>
</evidence>
<evidence type="ECO:0000305" key="3"/>
<feature type="chain" id="PRO_0000421955" description="(+)-epi-alpha-bisabolol synthase">
    <location>
        <begin position="1"/>
        <end position="546"/>
    </location>
</feature>
<feature type="short sequence motif" description="DDXXD motif">
    <location>
        <begin position="297"/>
        <end position="301"/>
    </location>
</feature>
<feature type="binding site" evidence="1">
    <location>
        <position position="297"/>
    </location>
    <ligand>
        <name>Mg(2+)</name>
        <dbReference type="ChEBI" id="CHEBI:18420"/>
        <label>1</label>
    </ligand>
</feature>
<feature type="binding site" evidence="1">
    <location>
        <position position="297"/>
    </location>
    <ligand>
        <name>Mg(2+)</name>
        <dbReference type="ChEBI" id="CHEBI:18420"/>
        <label>2</label>
    </ligand>
</feature>
<feature type="binding site" evidence="1">
    <location>
        <position position="301"/>
    </location>
    <ligand>
        <name>Mg(2+)</name>
        <dbReference type="ChEBI" id="CHEBI:18420"/>
        <label>1</label>
    </ligand>
</feature>
<feature type="binding site" evidence="1">
    <location>
        <position position="301"/>
    </location>
    <ligand>
        <name>Mg(2+)</name>
        <dbReference type="ChEBI" id="CHEBI:18420"/>
        <label>2</label>
    </ligand>
</feature>
<feature type="binding site" evidence="1">
    <location>
        <position position="441"/>
    </location>
    <ligand>
        <name>Mg(2+)</name>
        <dbReference type="ChEBI" id="CHEBI:18420"/>
        <label>3</label>
    </ligand>
</feature>
<feature type="binding site" evidence="1">
    <location>
        <position position="445"/>
    </location>
    <ligand>
        <name>Mg(2+)</name>
        <dbReference type="ChEBI" id="CHEBI:18420"/>
        <label>3</label>
    </ligand>
</feature>
<feature type="binding site" evidence="1">
    <location>
        <position position="449"/>
    </location>
    <ligand>
        <name>Mg(2+)</name>
        <dbReference type="ChEBI" id="CHEBI:18420"/>
        <label>3</label>
    </ligand>
</feature>
<sequence length="546" mass="63782">MNSTSRRSANYKPTIWNNEYLQSLNSIYGEKRFLEQAEKLKDEVRMLLEKTSDPLDHIELVDVLQRLAISYHFTEYIDRNLKNIYDILIDGRRWNHADNLHATTLSFRLLRQHGYQVSPEVFRNFMDETGNFKKNLCDDIKGLLSLYEASYLLTEGETIMDSAQAFATHHLKQKLEENMNKNLGDEIAHALELPLHWRVPKLDVRWSIDAYERRQDMNPLLLELAKLDFNIAQSMYQDELKELSRWYSKTHLPEKLAFARDRLVESYLWGLGLASEPHHKYCRMMVAQSTTLISIIDDIYDVYGTLDELQLFTHAVDRWDIKYLEQLPEYMQICFLALFNTVNERSYDFLLDKGFNVIPHSSYRWAELCKTYLIEANWYHSGYKPSLNEYLNQGLISVAGPHALSHTYLCMTDSLKEKHILDLRTNPPVIKWVSILVRLADDLGTSTDELKRGDNPKSIQCHMHDTGCNEEETRAYIKNLIGSTWKKINKDVLMNFEYSMDFRTAAMNGARVSQFMYQYDDDGHGVPEGKSKERVCSLIVEPIPLP</sequence>
<name>TPS8_PHYDL</name>
<dbReference type="EC" id="4.2.3.138"/>
<dbReference type="EMBL" id="JQ731636">
    <property type="protein sequence ID" value="AFR23372.1"/>
    <property type="molecule type" value="mRNA"/>
</dbReference>
<dbReference type="SMR" id="J7LH11"/>
<dbReference type="KEGG" id="ag:AFR23372"/>
<dbReference type="BRENDA" id="4.2.3.138">
    <property type="organism ID" value="13174"/>
</dbReference>
<dbReference type="UniPathway" id="UPA00213"/>
<dbReference type="GO" id="GO:0000287">
    <property type="term" value="F:magnesium ion binding"/>
    <property type="evidence" value="ECO:0007669"/>
    <property type="project" value="InterPro"/>
</dbReference>
<dbReference type="GO" id="GO:0010334">
    <property type="term" value="F:sesquiterpene synthase activity"/>
    <property type="evidence" value="ECO:0000314"/>
    <property type="project" value="UniProtKB"/>
</dbReference>
<dbReference type="GO" id="GO:1901943">
    <property type="term" value="P:(+)-epi-alpha-bisabolol biosynthetic process"/>
    <property type="evidence" value="ECO:0000314"/>
    <property type="project" value="UniProtKB"/>
</dbReference>
<dbReference type="GO" id="GO:0016102">
    <property type="term" value="P:diterpenoid biosynthetic process"/>
    <property type="evidence" value="ECO:0007669"/>
    <property type="project" value="InterPro"/>
</dbReference>
<dbReference type="GO" id="GO:0045339">
    <property type="term" value="P:farnesyl diphosphate catabolic process"/>
    <property type="evidence" value="ECO:0000314"/>
    <property type="project" value="UniProtKB"/>
</dbReference>
<dbReference type="CDD" id="cd00684">
    <property type="entry name" value="Terpene_cyclase_plant_C1"/>
    <property type="match status" value="1"/>
</dbReference>
<dbReference type="FunFam" id="1.10.600.10:FF:000007">
    <property type="entry name" value="Isoprene synthase, chloroplastic"/>
    <property type="match status" value="1"/>
</dbReference>
<dbReference type="FunFam" id="1.50.10.130:FF:000001">
    <property type="entry name" value="Isoprene synthase, chloroplastic"/>
    <property type="match status" value="1"/>
</dbReference>
<dbReference type="Gene3D" id="1.10.600.10">
    <property type="entry name" value="Farnesyl Diphosphate Synthase"/>
    <property type="match status" value="1"/>
</dbReference>
<dbReference type="Gene3D" id="1.50.10.130">
    <property type="entry name" value="Terpene synthase, N-terminal domain"/>
    <property type="match status" value="1"/>
</dbReference>
<dbReference type="InterPro" id="IPR008949">
    <property type="entry name" value="Isoprenoid_synthase_dom_sf"/>
</dbReference>
<dbReference type="InterPro" id="IPR034741">
    <property type="entry name" value="Terpene_cyclase-like_1_C"/>
</dbReference>
<dbReference type="InterPro" id="IPR044814">
    <property type="entry name" value="Terpene_cyclase_plant_C1"/>
</dbReference>
<dbReference type="InterPro" id="IPR001906">
    <property type="entry name" value="Terpene_synth_N"/>
</dbReference>
<dbReference type="InterPro" id="IPR036965">
    <property type="entry name" value="Terpene_synth_N_sf"/>
</dbReference>
<dbReference type="InterPro" id="IPR050148">
    <property type="entry name" value="Terpene_synthase-like"/>
</dbReference>
<dbReference type="InterPro" id="IPR005630">
    <property type="entry name" value="Terpene_synthase_metal-bd"/>
</dbReference>
<dbReference type="InterPro" id="IPR008930">
    <property type="entry name" value="Terpenoid_cyclase/PrenylTrfase"/>
</dbReference>
<dbReference type="PANTHER" id="PTHR31225">
    <property type="entry name" value="OS04G0344100 PROTEIN-RELATED"/>
    <property type="match status" value="1"/>
</dbReference>
<dbReference type="PANTHER" id="PTHR31225:SF98">
    <property type="entry name" value="TERPENE SYNTHASE 9-RELATED"/>
    <property type="match status" value="1"/>
</dbReference>
<dbReference type="Pfam" id="PF01397">
    <property type="entry name" value="Terpene_synth"/>
    <property type="match status" value="1"/>
</dbReference>
<dbReference type="Pfam" id="PF03936">
    <property type="entry name" value="Terpene_synth_C"/>
    <property type="match status" value="1"/>
</dbReference>
<dbReference type="SFLD" id="SFLDS00005">
    <property type="entry name" value="Isoprenoid_Synthase_Type_I"/>
    <property type="match status" value="1"/>
</dbReference>
<dbReference type="SFLD" id="SFLDG01019">
    <property type="entry name" value="Terpene_Cyclase_Like_1_C_Termi"/>
    <property type="match status" value="1"/>
</dbReference>
<dbReference type="SUPFAM" id="SSF48239">
    <property type="entry name" value="Terpenoid cyclases/Protein prenyltransferases"/>
    <property type="match status" value="1"/>
</dbReference>
<dbReference type="SUPFAM" id="SSF48576">
    <property type="entry name" value="Terpenoid synthases"/>
    <property type="match status" value="1"/>
</dbReference>
<organism>
    <name type="scientific">Phyla dulcis</name>
    <name type="common">Aztec sweet herb</name>
    <name type="synonym">Lippia dulcis</name>
    <dbReference type="NCBI Taxonomy" id="542674"/>
    <lineage>
        <taxon>Eukaryota</taxon>
        <taxon>Viridiplantae</taxon>
        <taxon>Streptophyta</taxon>
        <taxon>Embryophyta</taxon>
        <taxon>Tracheophyta</taxon>
        <taxon>Spermatophyta</taxon>
        <taxon>Magnoliopsida</taxon>
        <taxon>eudicotyledons</taxon>
        <taxon>Gunneridae</taxon>
        <taxon>Pentapetalae</taxon>
        <taxon>asterids</taxon>
        <taxon>lamiids</taxon>
        <taxon>Lamiales</taxon>
        <taxon>Verbenaceae</taxon>
        <taxon>Lantaneae</taxon>
        <taxon>Phyla</taxon>
    </lineage>
</organism>
<comment type="function">
    <text evidence="2">Sesquiterpene synthase involved in the biosynthesis of (+)-epi-alpha-bisabolol, a precursor of the natural sweetner hernandulcin.</text>
</comment>
<comment type="catalytic activity">
    <reaction evidence="2">
        <text>(2E,6E)-farnesyl diphosphate + H2O = (+)-epi-alpha-bisabolol + diphosphate</text>
        <dbReference type="Rhea" id="RHEA:34503"/>
        <dbReference type="ChEBI" id="CHEBI:15377"/>
        <dbReference type="ChEBI" id="CHEBI:33019"/>
        <dbReference type="ChEBI" id="CHEBI:68658"/>
        <dbReference type="ChEBI" id="CHEBI:175763"/>
        <dbReference type="EC" id="4.2.3.138"/>
    </reaction>
</comment>
<comment type="cofactor">
    <cofactor evidence="1">
        <name>Mg(2+)</name>
        <dbReference type="ChEBI" id="CHEBI:18420"/>
    </cofactor>
    <text evidence="1">Binds 3 Mg(2+) ions per subunit.</text>
</comment>
<comment type="biophysicochemical properties">
    <kinetics>
        <KM evidence="2">4.8 uM for (2E,6E)-farnesyl diphosphate</KM>
        <text>kcat is 0.04 sec(-1) for (2E,6E)-farnesyl diphosphate.</text>
    </kinetics>
</comment>
<comment type="pathway">
    <text>Secondary metabolite biosynthesis; terpenoid biosynthesis.</text>
</comment>
<comment type="domain">
    <text evidence="1">The Asp-Asp-Xaa-Xaa-Asp/Glu (DDXXD/E) motif is important for the catalytic activity, presumably through binding to Mg(2+).</text>
</comment>
<comment type="similarity">
    <text evidence="3">Belongs to the terpene synthase family.</text>
</comment>
<comment type="online information" name="Protein Spotlight">
    <link uri="https://www.proteinspotlight.org/back_issues/148"/>
    <text>The taste of sweet - Issue 148 of May 2013</text>
</comment>
<accession>J7LH11</accession>
<proteinExistence type="evidence at protein level"/>
<keyword id="KW-0456">Lyase</keyword>
<keyword id="KW-0460">Magnesium</keyword>
<keyword id="KW-0479">Metal-binding</keyword>
<reference key="1">
    <citation type="journal article" date="2012" name="Arch. Biochem. Biophys.">
        <title>Molecular cloning and characterization of (+)-epi-alpha-bisabolol synthase, catalyzing the first step in the biosynthesis of the natural sweetener, hernandulcin, in Lippia dulcis.</title>
        <authorList>
            <person name="Attia M."/>
            <person name="Kim S.U."/>
            <person name="Ro D.K."/>
        </authorList>
    </citation>
    <scope>NUCLEOTIDE SEQUENCE [MRNA]</scope>
    <scope>FUNCTION</scope>
    <scope>CATALYTIC ACTIVITY</scope>
    <scope>BIOPHYSICOCHEMICAL PROPERTIES</scope>
</reference>